<protein>
    <recommendedName>
        <fullName evidence="1">Acetaldehyde dehydrogenase</fullName>
        <ecNumber evidence="1">1.2.1.10</ecNumber>
    </recommendedName>
    <alternativeName>
        <fullName evidence="1">Acetaldehyde dehydrogenase [acetylating]</fullName>
    </alternativeName>
</protein>
<name>ACDH_XANP2</name>
<proteinExistence type="inferred from homology"/>
<reference key="1">
    <citation type="submission" date="2007-07" db="EMBL/GenBank/DDBJ databases">
        <title>Complete sequence of chromosome of Xanthobacter autotrophicus Py2.</title>
        <authorList>
            <consortium name="US DOE Joint Genome Institute"/>
            <person name="Copeland A."/>
            <person name="Lucas S."/>
            <person name="Lapidus A."/>
            <person name="Barry K."/>
            <person name="Glavina del Rio T."/>
            <person name="Hammon N."/>
            <person name="Israni S."/>
            <person name="Dalin E."/>
            <person name="Tice H."/>
            <person name="Pitluck S."/>
            <person name="Sims D."/>
            <person name="Brettin T."/>
            <person name="Bruce D."/>
            <person name="Detter J.C."/>
            <person name="Han C."/>
            <person name="Tapia R."/>
            <person name="Brainard J."/>
            <person name="Schmutz J."/>
            <person name="Larimer F."/>
            <person name="Land M."/>
            <person name="Hauser L."/>
            <person name="Kyrpides N."/>
            <person name="Kim E."/>
            <person name="Ensigns S.A."/>
            <person name="Richardson P."/>
        </authorList>
    </citation>
    <scope>NUCLEOTIDE SEQUENCE [LARGE SCALE GENOMIC DNA]</scope>
    <source>
        <strain>ATCC BAA-1158 / Py2</strain>
    </source>
</reference>
<evidence type="ECO:0000255" key="1">
    <source>
        <dbReference type="HAMAP-Rule" id="MF_01657"/>
    </source>
</evidence>
<sequence>MSTPRIKAAIIGSGNIGTDLMIKIMRTSRHLEMGAMVGIDPKSDGLARAARLNVPVTHEGIEGLRRLPNYAEIGVVFDATSAKAHLTNNALLQKDGKKVIDLTPAAVGPFTIPAINGDANLEEPNVNMVTCGGQATIPMVYAVKRAVKRLVYGEIVASISSKSAGPGTRANIDEFTETTSKAIEVLGGAERGKAVIILNPAEPPLIMRDTVFTLSQGGDREAIEASILEMAETVKTYVPGYRLKQKVQFEVIGDNAPVRIPGIGTASGLKTTILLEVEGAAHYLPAYAGNLDIMTSAALVTADRWAARRLAKEAA</sequence>
<dbReference type="EC" id="1.2.1.10" evidence="1"/>
<dbReference type="EMBL" id="CP000781">
    <property type="protein sequence ID" value="ABS66188.1"/>
    <property type="molecule type" value="Genomic_DNA"/>
</dbReference>
<dbReference type="SMR" id="A7IDU5"/>
<dbReference type="STRING" id="78245.Xaut_0937"/>
<dbReference type="KEGG" id="xau:Xaut_0937"/>
<dbReference type="eggNOG" id="COG4569">
    <property type="taxonomic scope" value="Bacteria"/>
</dbReference>
<dbReference type="HOGENOM" id="CLU_062208_0_0_5"/>
<dbReference type="OrthoDB" id="9786743at2"/>
<dbReference type="PhylomeDB" id="A7IDU5"/>
<dbReference type="Proteomes" id="UP000002417">
    <property type="component" value="Chromosome"/>
</dbReference>
<dbReference type="GO" id="GO:0008774">
    <property type="term" value="F:acetaldehyde dehydrogenase (acetylating) activity"/>
    <property type="evidence" value="ECO:0007669"/>
    <property type="project" value="UniProtKB-UniRule"/>
</dbReference>
<dbReference type="GO" id="GO:0051287">
    <property type="term" value="F:NAD binding"/>
    <property type="evidence" value="ECO:0007669"/>
    <property type="project" value="UniProtKB-UniRule"/>
</dbReference>
<dbReference type="GO" id="GO:0009056">
    <property type="term" value="P:catabolic process"/>
    <property type="evidence" value="ECO:0007669"/>
    <property type="project" value="UniProtKB-KW"/>
</dbReference>
<dbReference type="CDD" id="cd23933">
    <property type="entry name" value="ALDH_C"/>
    <property type="match status" value="1"/>
</dbReference>
<dbReference type="Gene3D" id="3.30.360.10">
    <property type="entry name" value="Dihydrodipicolinate Reductase, domain 2"/>
    <property type="match status" value="1"/>
</dbReference>
<dbReference type="Gene3D" id="3.40.50.720">
    <property type="entry name" value="NAD(P)-binding Rossmann-like Domain"/>
    <property type="match status" value="1"/>
</dbReference>
<dbReference type="HAMAP" id="MF_01657">
    <property type="entry name" value="Ac_ald_DH_ac"/>
    <property type="match status" value="1"/>
</dbReference>
<dbReference type="InterPro" id="IPR003361">
    <property type="entry name" value="Acetaldehyde_dehydrogenase"/>
</dbReference>
<dbReference type="InterPro" id="IPR015426">
    <property type="entry name" value="Acetylaldehyde_DH_C"/>
</dbReference>
<dbReference type="InterPro" id="IPR036291">
    <property type="entry name" value="NAD(P)-bd_dom_sf"/>
</dbReference>
<dbReference type="InterPro" id="IPR000534">
    <property type="entry name" value="Semialdehyde_DH_NAD-bd"/>
</dbReference>
<dbReference type="NCBIfam" id="TIGR03215">
    <property type="entry name" value="ac_ald_DH_ac"/>
    <property type="match status" value="1"/>
</dbReference>
<dbReference type="NCBIfam" id="NF006157">
    <property type="entry name" value="PRK08300.1"/>
    <property type="match status" value="1"/>
</dbReference>
<dbReference type="Pfam" id="PF09290">
    <property type="entry name" value="AcetDehyd-dimer"/>
    <property type="match status" value="1"/>
</dbReference>
<dbReference type="PIRSF" id="PIRSF015689">
    <property type="entry name" value="Actaldh_dh_actl"/>
    <property type="match status" value="1"/>
</dbReference>
<dbReference type="SMART" id="SM00859">
    <property type="entry name" value="Semialdhyde_dh"/>
    <property type="match status" value="1"/>
</dbReference>
<dbReference type="SUPFAM" id="SSF55347">
    <property type="entry name" value="Glyceraldehyde-3-phosphate dehydrogenase-like, C-terminal domain"/>
    <property type="match status" value="1"/>
</dbReference>
<dbReference type="SUPFAM" id="SSF51735">
    <property type="entry name" value="NAD(P)-binding Rossmann-fold domains"/>
    <property type="match status" value="1"/>
</dbReference>
<feature type="chain" id="PRO_0000387751" description="Acetaldehyde dehydrogenase">
    <location>
        <begin position="1"/>
        <end position="315"/>
    </location>
</feature>
<feature type="active site" description="Acyl-thioester intermediate" evidence="1">
    <location>
        <position position="131"/>
    </location>
</feature>
<feature type="binding site" evidence="1">
    <location>
        <begin position="13"/>
        <end position="16"/>
    </location>
    <ligand>
        <name>NAD(+)</name>
        <dbReference type="ChEBI" id="CHEBI:57540"/>
    </ligand>
</feature>
<feature type="binding site" evidence="1">
    <location>
        <begin position="163"/>
        <end position="171"/>
    </location>
    <ligand>
        <name>NAD(+)</name>
        <dbReference type="ChEBI" id="CHEBI:57540"/>
    </ligand>
</feature>
<feature type="binding site" evidence="1">
    <location>
        <position position="290"/>
    </location>
    <ligand>
        <name>NAD(+)</name>
        <dbReference type="ChEBI" id="CHEBI:57540"/>
    </ligand>
</feature>
<accession>A7IDU5</accession>
<comment type="catalytic activity">
    <reaction evidence="1">
        <text>acetaldehyde + NAD(+) + CoA = acetyl-CoA + NADH + H(+)</text>
        <dbReference type="Rhea" id="RHEA:23288"/>
        <dbReference type="ChEBI" id="CHEBI:15343"/>
        <dbReference type="ChEBI" id="CHEBI:15378"/>
        <dbReference type="ChEBI" id="CHEBI:57287"/>
        <dbReference type="ChEBI" id="CHEBI:57288"/>
        <dbReference type="ChEBI" id="CHEBI:57540"/>
        <dbReference type="ChEBI" id="CHEBI:57945"/>
        <dbReference type="EC" id="1.2.1.10"/>
    </reaction>
</comment>
<comment type="similarity">
    <text evidence="1">Belongs to the acetaldehyde dehydrogenase family.</text>
</comment>
<organism>
    <name type="scientific">Xanthobacter autotrophicus (strain ATCC BAA-1158 / Py2)</name>
    <dbReference type="NCBI Taxonomy" id="78245"/>
    <lineage>
        <taxon>Bacteria</taxon>
        <taxon>Pseudomonadati</taxon>
        <taxon>Pseudomonadota</taxon>
        <taxon>Alphaproteobacteria</taxon>
        <taxon>Hyphomicrobiales</taxon>
        <taxon>Xanthobacteraceae</taxon>
        <taxon>Xanthobacter</taxon>
    </lineage>
</organism>
<keyword id="KW-0058">Aromatic hydrocarbons catabolism</keyword>
<keyword id="KW-0520">NAD</keyword>
<keyword id="KW-0560">Oxidoreductase</keyword>
<keyword id="KW-1185">Reference proteome</keyword>
<gene>
    <name type="ordered locus">Xaut_0937</name>
</gene>